<evidence type="ECO:0000255" key="1">
    <source>
        <dbReference type="HAMAP-Rule" id="MF_00460"/>
    </source>
</evidence>
<organism>
    <name type="scientific">Escherichia coli O8 (strain IAI1)</name>
    <dbReference type="NCBI Taxonomy" id="585034"/>
    <lineage>
        <taxon>Bacteria</taxon>
        <taxon>Pseudomonadati</taxon>
        <taxon>Pseudomonadota</taxon>
        <taxon>Gammaproteobacteria</taxon>
        <taxon>Enterobacterales</taxon>
        <taxon>Enterobacteriaceae</taxon>
        <taxon>Escherichia</taxon>
    </lineage>
</organism>
<reference key="1">
    <citation type="journal article" date="2009" name="PLoS Genet.">
        <title>Organised genome dynamics in the Escherichia coli species results in highly diverse adaptive paths.</title>
        <authorList>
            <person name="Touchon M."/>
            <person name="Hoede C."/>
            <person name="Tenaillon O."/>
            <person name="Barbe V."/>
            <person name="Baeriswyl S."/>
            <person name="Bidet P."/>
            <person name="Bingen E."/>
            <person name="Bonacorsi S."/>
            <person name="Bouchier C."/>
            <person name="Bouvet O."/>
            <person name="Calteau A."/>
            <person name="Chiapello H."/>
            <person name="Clermont O."/>
            <person name="Cruveiller S."/>
            <person name="Danchin A."/>
            <person name="Diard M."/>
            <person name="Dossat C."/>
            <person name="Karoui M.E."/>
            <person name="Frapy E."/>
            <person name="Garry L."/>
            <person name="Ghigo J.M."/>
            <person name="Gilles A.M."/>
            <person name="Johnson J."/>
            <person name="Le Bouguenec C."/>
            <person name="Lescat M."/>
            <person name="Mangenot S."/>
            <person name="Martinez-Jehanne V."/>
            <person name="Matic I."/>
            <person name="Nassif X."/>
            <person name="Oztas S."/>
            <person name="Petit M.A."/>
            <person name="Pichon C."/>
            <person name="Rouy Z."/>
            <person name="Ruf C.S."/>
            <person name="Schneider D."/>
            <person name="Tourret J."/>
            <person name="Vacherie B."/>
            <person name="Vallenet D."/>
            <person name="Medigue C."/>
            <person name="Rocha E.P.C."/>
            <person name="Denamur E."/>
        </authorList>
    </citation>
    <scope>NUCLEOTIDE SEQUENCE [LARGE SCALE GENOMIC DNA]</scope>
    <source>
        <strain>IAI1</strain>
    </source>
</reference>
<name>RNFH_ECO8A</name>
<accession>B7M987</accession>
<sequence length="96" mass="10789">MPGKIAVEVAYALPEKQYLQRVTLQEGATVEEAIRASGLLELRTDIDLTKNKVGIYSRPAKLSDSVHDGDRVEIYRPLIADPKELRRQRAEKSANK</sequence>
<comment type="similarity">
    <text evidence="1">Belongs to the UPF0125 (RnfH) family.</text>
</comment>
<gene>
    <name evidence="1" type="primary">rnfH</name>
    <name type="ordered locus">ECIAI1_2739</name>
</gene>
<feature type="chain" id="PRO_1000200182" description="Protein RnfH">
    <location>
        <begin position="1"/>
        <end position="96"/>
    </location>
</feature>
<protein>
    <recommendedName>
        <fullName evidence="1">Protein RnfH</fullName>
    </recommendedName>
</protein>
<proteinExistence type="inferred from homology"/>
<dbReference type="EMBL" id="CU928160">
    <property type="protein sequence ID" value="CAQ99566.1"/>
    <property type="molecule type" value="Genomic_DNA"/>
</dbReference>
<dbReference type="RefSeq" id="WP_001117838.1">
    <property type="nucleotide sequence ID" value="NC_011741.1"/>
</dbReference>
<dbReference type="SMR" id="B7M987"/>
<dbReference type="KEGG" id="ecr:ECIAI1_2739"/>
<dbReference type="HOGENOM" id="CLU_150721_1_0_6"/>
<dbReference type="Gene3D" id="3.10.20.280">
    <property type="entry name" value="RnfH-like"/>
    <property type="match status" value="1"/>
</dbReference>
<dbReference type="HAMAP" id="MF_00460">
    <property type="entry name" value="UPF0125_RnfH"/>
    <property type="match status" value="1"/>
</dbReference>
<dbReference type="InterPro" id="IPR016155">
    <property type="entry name" value="Mopterin_synth/thiamin_S_b"/>
</dbReference>
<dbReference type="InterPro" id="IPR005346">
    <property type="entry name" value="RnfH"/>
</dbReference>
<dbReference type="InterPro" id="IPR037021">
    <property type="entry name" value="RnfH_sf"/>
</dbReference>
<dbReference type="NCBIfam" id="NF002490">
    <property type="entry name" value="PRK01777.1"/>
    <property type="match status" value="1"/>
</dbReference>
<dbReference type="PANTHER" id="PTHR37483">
    <property type="entry name" value="UPF0125 PROTEIN RATB"/>
    <property type="match status" value="1"/>
</dbReference>
<dbReference type="PANTHER" id="PTHR37483:SF1">
    <property type="entry name" value="UPF0125 PROTEIN RATB"/>
    <property type="match status" value="1"/>
</dbReference>
<dbReference type="Pfam" id="PF03658">
    <property type="entry name" value="Ub-RnfH"/>
    <property type="match status" value="1"/>
</dbReference>
<dbReference type="SUPFAM" id="SSF54285">
    <property type="entry name" value="MoaD/ThiS"/>
    <property type="match status" value="1"/>
</dbReference>